<organism>
    <name type="scientific">Bradyrhizobium sp. (strain ORS 278)</name>
    <dbReference type="NCBI Taxonomy" id="114615"/>
    <lineage>
        <taxon>Bacteria</taxon>
        <taxon>Pseudomonadati</taxon>
        <taxon>Pseudomonadota</taxon>
        <taxon>Alphaproteobacteria</taxon>
        <taxon>Hyphomicrobiales</taxon>
        <taxon>Nitrobacteraceae</taxon>
        <taxon>Bradyrhizobium</taxon>
    </lineage>
</organism>
<keyword id="KW-0119">Carbohydrate metabolism</keyword>
<keyword id="KW-0320">Glycogen biosynthesis</keyword>
<keyword id="KW-0321">Glycogen metabolism</keyword>
<keyword id="KW-0328">Glycosyltransferase</keyword>
<keyword id="KW-1185">Reference proteome</keyword>
<keyword id="KW-0808">Transferase</keyword>
<evidence type="ECO:0000255" key="1">
    <source>
        <dbReference type="HAMAP-Rule" id="MF_00685"/>
    </source>
</evidence>
<sequence length="712" mass="81178">MTHLSPEAFAIIEGRHADPFRYLGQHNVDGQTIVRAFLPEASRVEVVGEHGEVAPLARIHDAGLFTGTMSSMQRYRLRATFGDSVTDLEDPYRFLPILGDFDLHLLGEGNHERLYDKLGAHPMVIDGVDGVGFVVLAPNARRVSVVGDFNFWNARRHPMRVRGNGYWELFIPRARAGDHYKFDIIGPQGEHLPLKSDPMAFAAEMRPKTASIVVDETRLPRPRPAPHDINKLNKPVSIYEVHLGSWRRKDNNQWLTYRELAEQLPAYARDMGFTHIEFLPINEHPFDGSWGYQPTGLYAPTSRFGSPEDFCALVDACHREGLAVWLDWVPGHFPDDPHGLGHFDGTALYEHANPMQGRHLDWGTLIYNYGRTEVANFLRSNALFWLERYGIDGLRVDAVASMLYLDYSRPSGGWIPNKYGGRENLEAIEFLRRTNIDVFGHFPQATTAAEESTAWPQVSRPVDTGGLGFGYKWNMGWMHDTLRYVSKDPIHRKYHHGEILFGLHYAFSENFILPLSHDEVVHGKRSILGRMPGDDWQRFANLRAYYSFMFGHPGKKLLFMGCELAQEREWNHDTSLDWHLLGDARYAGIQALIRDLNHLYRNQPALHERDCDPEGFEWLITDDADRNVFAWVRKGFDERAHCVVVVNFSPNVYYNYRVRAPLGGTWREVFNSDSSHYGGSNVGNVGQVHASEDQHLNLILPPMAAVFLVPEA</sequence>
<reference key="1">
    <citation type="journal article" date="2007" name="Science">
        <title>Legumes symbioses: absence of nod genes in photosynthetic bradyrhizobia.</title>
        <authorList>
            <person name="Giraud E."/>
            <person name="Moulin L."/>
            <person name="Vallenet D."/>
            <person name="Barbe V."/>
            <person name="Cytryn E."/>
            <person name="Avarre J.-C."/>
            <person name="Jaubert M."/>
            <person name="Simon D."/>
            <person name="Cartieaux F."/>
            <person name="Prin Y."/>
            <person name="Bena G."/>
            <person name="Hannibal L."/>
            <person name="Fardoux J."/>
            <person name="Kojadinovic M."/>
            <person name="Vuillet L."/>
            <person name="Lajus A."/>
            <person name="Cruveiller S."/>
            <person name="Rouy Z."/>
            <person name="Mangenot S."/>
            <person name="Segurens B."/>
            <person name="Dossat C."/>
            <person name="Franck W.L."/>
            <person name="Chang W.-S."/>
            <person name="Saunders E."/>
            <person name="Bruce D."/>
            <person name="Richardson P."/>
            <person name="Normand P."/>
            <person name="Dreyfus B."/>
            <person name="Pignol D."/>
            <person name="Stacey G."/>
            <person name="Emerich D."/>
            <person name="Vermeglio A."/>
            <person name="Medigue C."/>
            <person name="Sadowsky M."/>
        </authorList>
    </citation>
    <scope>NUCLEOTIDE SEQUENCE [LARGE SCALE GENOMIC DNA]</scope>
    <source>
        <strain>ORS 278</strain>
    </source>
</reference>
<comment type="function">
    <text evidence="1">Catalyzes the formation of the alpha-1,6-glucosidic linkages in glycogen by scission of a 1,4-alpha-linked oligosaccharide from growing alpha-1,4-glucan chains and the subsequent attachment of the oligosaccharide to the alpha-1,6 position.</text>
</comment>
<comment type="catalytic activity">
    <reaction evidence="1">
        <text>Transfers a segment of a (1-&gt;4)-alpha-D-glucan chain to a primary hydroxy group in a similar glucan chain.</text>
        <dbReference type="EC" id="2.4.1.18"/>
    </reaction>
</comment>
<comment type="pathway">
    <text evidence="1">Glycan biosynthesis; glycogen biosynthesis.</text>
</comment>
<comment type="subunit">
    <text evidence="1">Monomer.</text>
</comment>
<comment type="similarity">
    <text evidence="1">Belongs to the glycosyl hydrolase 13 family. GlgB subfamily.</text>
</comment>
<proteinExistence type="inferred from homology"/>
<gene>
    <name evidence="1" type="primary">glgB</name>
    <name type="ordered locus">BRADO5817</name>
</gene>
<feature type="chain" id="PRO_1000061988" description="1,4-alpha-glucan branching enzyme GlgB">
    <location>
        <begin position="1"/>
        <end position="712"/>
    </location>
</feature>
<feature type="active site" description="Nucleophile" evidence="1">
    <location>
        <position position="397"/>
    </location>
</feature>
<feature type="active site" description="Proton donor" evidence="1">
    <location>
        <position position="450"/>
    </location>
</feature>
<protein>
    <recommendedName>
        <fullName evidence="1">1,4-alpha-glucan branching enzyme GlgB</fullName>
        <ecNumber evidence="1">2.4.1.18</ecNumber>
    </recommendedName>
    <alternativeName>
        <fullName evidence="1">1,4-alpha-D-glucan:1,4-alpha-D-glucan 6-glucosyl-transferase</fullName>
    </alternativeName>
    <alternativeName>
        <fullName evidence="1">Alpha-(1-&gt;4)-glucan branching enzyme</fullName>
    </alternativeName>
    <alternativeName>
        <fullName evidence="1">Glycogen branching enzyme</fullName>
        <shortName evidence="1">BE</shortName>
    </alternativeName>
</protein>
<name>GLGB_BRASO</name>
<accession>A4Z005</accession>
<dbReference type="EC" id="2.4.1.18" evidence="1"/>
<dbReference type="EMBL" id="CU234118">
    <property type="protein sequence ID" value="CAL79481.1"/>
    <property type="molecule type" value="Genomic_DNA"/>
</dbReference>
<dbReference type="RefSeq" id="WP_012029384.1">
    <property type="nucleotide sequence ID" value="NC_009445.1"/>
</dbReference>
<dbReference type="SMR" id="A4Z005"/>
<dbReference type="STRING" id="114615.BRADO5817"/>
<dbReference type="CAZy" id="CBM48">
    <property type="family name" value="Carbohydrate-Binding Module Family 48"/>
</dbReference>
<dbReference type="CAZy" id="GH13">
    <property type="family name" value="Glycoside Hydrolase Family 13"/>
</dbReference>
<dbReference type="KEGG" id="bra:BRADO5817"/>
<dbReference type="eggNOG" id="COG0296">
    <property type="taxonomic scope" value="Bacteria"/>
</dbReference>
<dbReference type="HOGENOM" id="CLU_004245_3_2_5"/>
<dbReference type="OrthoDB" id="9800174at2"/>
<dbReference type="UniPathway" id="UPA00164"/>
<dbReference type="Proteomes" id="UP000001994">
    <property type="component" value="Chromosome"/>
</dbReference>
<dbReference type="GO" id="GO:0005829">
    <property type="term" value="C:cytosol"/>
    <property type="evidence" value="ECO:0007669"/>
    <property type="project" value="TreeGrafter"/>
</dbReference>
<dbReference type="GO" id="GO:0003844">
    <property type="term" value="F:1,4-alpha-glucan branching enzyme activity"/>
    <property type="evidence" value="ECO:0007669"/>
    <property type="project" value="UniProtKB-UniRule"/>
</dbReference>
<dbReference type="GO" id="GO:0043169">
    <property type="term" value="F:cation binding"/>
    <property type="evidence" value="ECO:0007669"/>
    <property type="project" value="InterPro"/>
</dbReference>
<dbReference type="GO" id="GO:0004553">
    <property type="term" value="F:hydrolase activity, hydrolyzing O-glycosyl compounds"/>
    <property type="evidence" value="ECO:0007669"/>
    <property type="project" value="InterPro"/>
</dbReference>
<dbReference type="GO" id="GO:0005978">
    <property type="term" value="P:glycogen biosynthetic process"/>
    <property type="evidence" value="ECO:0007669"/>
    <property type="project" value="UniProtKB-UniRule"/>
</dbReference>
<dbReference type="CDD" id="cd11322">
    <property type="entry name" value="AmyAc_Glg_BE"/>
    <property type="match status" value="1"/>
</dbReference>
<dbReference type="CDD" id="cd02855">
    <property type="entry name" value="E_set_GBE_prok_N"/>
    <property type="match status" value="1"/>
</dbReference>
<dbReference type="FunFam" id="2.60.40.10:FF:000169">
    <property type="entry name" value="1,4-alpha-glucan branching enzyme GlgB"/>
    <property type="match status" value="1"/>
</dbReference>
<dbReference type="FunFam" id="2.60.40.1180:FF:000002">
    <property type="entry name" value="1,4-alpha-glucan branching enzyme GlgB"/>
    <property type="match status" value="1"/>
</dbReference>
<dbReference type="FunFam" id="3.20.20.80:FF:000003">
    <property type="entry name" value="1,4-alpha-glucan branching enzyme GlgB"/>
    <property type="match status" value="1"/>
</dbReference>
<dbReference type="Gene3D" id="3.20.20.80">
    <property type="entry name" value="Glycosidases"/>
    <property type="match status" value="1"/>
</dbReference>
<dbReference type="Gene3D" id="2.60.40.1180">
    <property type="entry name" value="Golgi alpha-mannosidase II"/>
    <property type="match status" value="1"/>
</dbReference>
<dbReference type="Gene3D" id="2.60.40.10">
    <property type="entry name" value="Immunoglobulins"/>
    <property type="match status" value="2"/>
</dbReference>
<dbReference type="HAMAP" id="MF_00685">
    <property type="entry name" value="GlgB"/>
    <property type="match status" value="1"/>
</dbReference>
<dbReference type="InterPro" id="IPR006048">
    <property type="entry name" value="A-amylase/branching_C"/>
</dbReference>
<dbReference type="InterPro" id="IPR037439">
    <property type="entry name" value="Branching_enzy"/>
</dbReference>
<dbReference type="InterPro" id="IPR006407">
    <property type="entry name" value="GlgB"/>
</dbReference>
<dbReference type="InterPro" id="IPR054169">
    <property type="entry name" value="GlgB_N"/>
</dbReference>
<dbReference type="InterPro" id="IPR044143">
    <property type="entry name" value="GlgB_N_E_set_prok"/>
</dbReference>
<dbReference type="InterPro" id="IPR006047">
    <property type="entry name" value="Glyco_hydro_13_cat_dom"/>
</dbReference>
<dbReference type="InterPro" id="IPR004193">
    <property type="entry name" value="Glyco_hydro_13_N"/>
</dbReference>
<dbReference type="InterPro" id="IPR013780">
    <property type="entry name" value="Glyco_hydro_b"/>
</dbReference>
<dbReference type="InterPro" id="IPR017853">
    <property type="entry name" value="Glycoside_hydrolase_SF"/>
</dbReference>
<dbReference type="InterPro" id="IPR013783">
    <property type="entry name" value="Ig-like_fold"/>
</dbReference>
<dbReference type="InterPro" id="IPR014756">
    <property type="entry name" value="Ig_E-set"/>
</dbReference>
<dbReference type="NCBIfam" id="TIGR01515">
    <property type="entry name" value="branching_enzym"/>
    <property type="match status" value="1"/>
</dbReference>
<dbReference type="NCBIfam" id="NF003811">
    <property type="entry name" value="PRK05402.1"/>
    <property type="match status" value="1"/>
</dbReference>
<dbReference type="NCBIfam" id="NF008967">
    <property type="entry name" value="PRK12313.1"/>
    <property type="match status" value="1"/>
</dbReference>
<dbReference type="PANTHER" id="PTHR43651">
    <property type="entry name" value="1,4-ALPHA-GLUCAN-BRANCHING ENZYME"/>
    <property type="match status" value="1"/>
</dbReference>
<dbReference type="PANTHER" id="PTHR43651:SF3">
    <property type="entry name" value="1,4-ALPHA-GLUCAN-BRANCHING ENZYME"/>
    <property type="match status" value="1"/>
</dbReference>
<dbReference type="Pfam" id="PF00128">
    <property type="entry name" value="Alpha-amylase"/>
    <property type="match status" value="1"/>
</dbReference>
<dbReference type="Pfam" id="PF02806">
    <property type="entry name" value="Alpha-amylase_C"/>
    <property type="match status" value="1"/>
</dbReference>
<dbReference type="Pfam" id="PF02922">
    <property type="entry name" value="CBM_48"/>
    <property type="match status" value="1"/>
</dbReference>
<dbReference type="Pfam" id="PF22019">
    <property type="entry name" value="GlgB_N"/>
    <property type="match status" value="1"/>
</dbReference>
<dbReference type="PIRSF" id="PIRSF000463">
    <property type="entry name" value="GlgB"/>
    <property type="match status" value="1"/>
</dbReference>
<dbReference type="SMART" id="SM00642">
    <property type="entry name" value="Aamy"/>
    <property type="match status" value="1"/>
</dbReference>
<dbReference type="SUPFAM" id="SSF51445">
    <property type="entry name" value="(Trans)glycosidases"/>
    <property type="match status" value="1"/>
</dbReference>
<dbReference type="SUPFAM" id="SSF81296">
    <property type="entry name" value="E set domains"/>
    <property type="match status" value="2"/>
</dbReference>
<dbReference type="SUPFAM" id="SSF51011">
    <property type="entry name" value="Glycosyl hydrolase domain"/>
    <property type="match status" value="1"/>
</dbReference>